<keyword id="KW-0067">ATP-binding</keyword>
<keyword id="KW-0963">Cytoplasm</keyword>
<keyword id="KW-0227">DNA damage</keyword>
<keyword id="KW-0228">DNA excision</keyword>
<keyword id="KW-0234">DNA repair</keyword>
<keyword id="KW-0267">Excision nuclease</keyword>
<keyword id="KW-0347">Helicase</keyword>
<keyword id="KW-0378">Hydrolase</keyword>
<keyword id="KW-0547">Nucleotide-binding</keyword>
<keyword id="KW-0742">SOS response</keyword>
<name>UVRB_NITV9</name>
<dbReference type="EMBL" id="CP001197">
    <property type="protein sequence ID" value="ACL07411.1"/>
    <property type="molecule type" value="Genomic_DNA"/>
</dbReference>
<dbReference type="SMR" id="B8DJT9"/>
<dbReference type="STRING" id="883.DvMF_0454"/>
<dbReference type="KEGG" id="dvm:DvMF_0454"/>
<dbReference type="eggNOG" id="COG0556">
    <property type="taxonomic scope" value="Bacteria"/>
</dbReference>
<dbReference type="HOGENOM" id="CLU_009621_2_1_7"/>
<dbReference type="OrthoDB" id="9806651at2"/>
<dbReference type="GO" id="GO:0005737">
    <property type="term" value="C:cytoplasm"/>
    <property type="evidence" value="ECO:0007669"/>
    <property type="project" value="UniProtKB-SubCell"/>
</dbReference>
<dbReference type="GO" id="GO:0009380">
    <property type="term" value="C:excinuclease repair complex"/>
    <property type="evidence" value="ECO:0007669"/>
    <property type="project" value="InterPro"/>
</dbReference>
<dbReference type="GO" id="GO:0005524">
    <property type="term" value="F:ATP binding"/>
    <property type="evidence" value="ECO:0007669"/>
    <property type="project" value="UniProtKB-UniRule"/>
</dbReference>
<dbReference type="GO" id="GO:0016887">
    <property type="term" value="F:ATP hydrolysis activity"/>
    <property type="evidence" value="ECO:0007669"/>
    <property type="project" value="InterPro"/>
</dbReference>
<dbReference type="GO" id="GO:0003677">
    <property type="term" value="F:DNA binding"/>
    <property type="evidence" value="ECO:0007669"/>
    <property type="project" value="UniProtKB-UniRule"/>
</dbReference>
<dbReference type="GO" id="GO:0009381">
    <property type="term" value="F:excinuclease ABC activity"/>
    <property type="evidence" value="ECO:0007669"/>
    <property type="project" value="UniProtKB-UniRule"/>
</dbReference>
<dbReference type="GO" id="GO:0004386">
    <property type="term" value="F:helicase activity"/>
    <property type="evidence" value="ECO:0007669"/>
    <property type="project" value="UniProtKB-KW"/>
</dbReference>
<dbReference type="GO" id="GO:0006289">
    <property type="term" value="P:nucleotide-excision repair"/>
    <property type="evidence" value="ECO:0007669"/>
    <property type="project" value="UniProtKB-UniRule"/>
</dbReference>
<dbReference type="GO" id="GO:0009432">
    <property type="term" value="P:SOS response"/>
    <property type="evidence" value="ECO:0007669"/>
    <property type="project" value="UniProtKB-UniRule"/>
</dbReference>
<dbReference type="CDD" id="cd17916">
    <property type="entry name" value="DEXHc_UvrB"/>
    <property type="match status" value="1"/>
</dbReference>
<dbReference type="CDD" id="cd18790">
    <property type="entry name" value="SF2_C_UvrB"/>
    <property type="match status" value="1"/>
</dbReference>
<dbReference type="Gene3D" id="3.40.50.300">
    <property type="entry name" value="P-loop containing nucleotide triphosphate hydrolases"/>
    <property type="match status" value="3"/>
</dbReference>
<dbReference type="Gene3D" id="4.10.860.10">
    <property type="entry name" value="UVR domain"/>
    <property type="match status" value="1"/>
</dbReference>
<dbReference type="HAMAP" id="MF_00204">
    <property type="entry name" value="UvrB"/>
    <property type="match status" value="1"/>
</dbReference>
<dbReference type="InterPro" id="IPR006935">
    <property type="entry name" value="Helicase/UvrB_N"/>
</dbReference>
<dbReference type="InterPro" id="IPR014001">
    <property type="entry name" value="Helicase_ATP-bd"/>
</dbReference>
<dbReference type="InterPro" id="IPR001650">
    <property type="entry name" value="Helicase_C-like"/>
</dbReference>
<dbReference type="InterPro" id="IPR027417">
    <property type="entry name" value="P-loop_NTPase"/>
</dbReference>
<dbReference type="InterPro" id="IPR001943">
    <property type="entry name" value="UVR_dom"/>
</dbReference>
<dbReference type="InterPro" id="IPR036876">
    <property type="entry name" value="UVR_dom_sf"/>
</dbReference>
<dbReference type="InterPro" id="IPR004807">
    <property type="entry name" value="UvrB"/>
</dbReference>
<dbReference type="InterPro" id="IPR041471">
    <property type="entry name" value="UvrB_inter"/>
</dbReference>
<dbReference type="InterPro" id="IPR024759">
    <property type="entry name" value="UvrB_YAD/RRR_dom"/>
</dbReference>
<dbReference type="NCBIfam" id="NF003673">
    <property type="entry name" value="PRK05298.1"/>
    <property type="match status" value="1"/>
</dbReference>
<dbReference type="NCBIfam" id="TIGR00631">
    <property type="entry name" value="uvrb"/>
    <property type="match status" value="1"/>
</dbReference>
<dbReference type="PANTHER" id="PTHR24029">
    <property type="entry name" value="UVRABC SYSTEM PROTEIN B"/>
    <property type="match status" value="1"/>
</dbReference>
<dbReference type="PANTHER" id="PTHR24029:SF0">
    <property type="entry name" value="UVRABC SYSTEM PROTEIN B"/>
    <property type="match status" value="1"/>
</dbReference>
<dbReference type="Pfam" id="PF00271">
    <property type="entry name" value="Helicase_C"/>
    <property type="match status" value="1"/>
</dbReference>
<dbReference type="Pfam" id="PF04851">
    <property type="entry name" value="ResIII"/>
    <property type="match status" value="1"/>
</dbReference>
<dbReference type="Pfam" id="PF02151">
    <property type="entry name" value="UVR"/>
    <property type="match status" value="1"/>
</dbReference>
<dbReference type="Pfam" id="PF12344">
    <property type="entry name" value="UvrB"/>
    <property type="match status" value="1"/>
</dbReference>
<dbReference type="Pfam" id="PF17757">
    <property type="entry name" value="UvrB_inter"/>
    <property type="match status" value="1"/>
</dbReference>
<dbReference type="SMART" id="SM00487">
    <property type="entry name" value="DEXDc"/>
    <property type="match status" value="1"/>
</dbReference>
<dbReference type="SMART" id="SM00490">
    <property type="entry name" value="HELICc"/>
    <property type="match status" value="1"/>
</dbReference>
<dbReference type="SUPFAM" id="SSF46600">
    <property type="entry name" value="C-terminal UvrC-binding domain of UvrB"/>
    <property type="match status" value="1"/>
</dbReference>
<dbReference type="SUPFAM" id="SSF52540">
    <property type="entry name" value="P-loop containing nucleoside triphosphate hydrolases"/>
    <property type="match status" value="2"/>
</dbReference>
<dbReference type="PROSITE" id="PS51192">
    <property type="entry name" value="HELICASE_ATP_BIND_1"/>
    <property type="match status" value="1"/>
</dbReference>
<dbReference type="PROSITE" id="PS51194">
    <property type="entry name" value="HELICASE_CTER"/>
    <property type="match status" value="1"/>
</dbReference>
<dbReference type="PROSITE" id="PS50151">
    <property type="entry name" value="UVR"/>
    <property type="match status" value="1"/>
</dbReference>
<evidence type="ECO:0000255" key="1">
    <source>
        <dbReference type="HAMAP-Rule" id="MF_00204"/>
    </source>
</evidence>
<feature type="chain" id="PRO_1000200539" description="UvrABC system protein B">
    <location>
        <begin position="1"/>
        <end position="680"/>
    </location>
</feature>
<feature type="domain" description="Helicase ATP-binding" evidence="1">
    <location>
        <begin position="27"/>
        <end position="192"/>
    </location>
</feature>
<feature type="domain" description="Helicase C-terminal" evidence="1">
    <location>
        <begin position="432"/>
        <end position="594"/>
    </location>
</feature>
<feature type="domain" description="UVR" evidence="1">
    <location>
        <begin position="637"/>
        <end position="672"/>
    </location>
</feature>
<feature type="short sequence motif" description="Beta-hairpin">
    <location>
        <begin position="93"/>
        <end position="116"/>
    </location>
</feature>
<feature type="binding site" evidence="1">
    <location>
        <begin position="40"/>
        <end position="47"/>
    </location>
    <ligand>
        <name>ATP</name>
        <dbReference type="ChEBI" id="CHEBI:30616"/>
    </ligand>
</feature>
<sequence length="680" mass="76567">MTQSPFILRTDYEPRGDQPEAIGQIVSNIEAGVTDQVLLGVTGSGKTFTMAQVIARCGRPALVLAPNKTLAAQLYNEFRQLFPENAVEYFVSYYDYYQPEAYVPSSDTYIEKDSSINDNIDKLRHAATHALLTRRDVVIVASVSCIYGLGSPEYYAKLVIPVETGQRLSMDALITRLVEVQYERNDYDFHRGTFRVRGDVLEIIPAYHHERALRIEFFGDDIDAISEIDPLTGQVLASVGKTVIYPASHYVSDRDNLVRAISDIRDELGERLRELKGGNRLVEAQRLEQRTMLDLEMMEEMGYCNGVENYSRHLDGRKAGDPPSCLLDYFPDDFLLFVDESHITVSQVGAMYKGDRSRKSTLVDYGFRLPSALDNRPLEFHEFLARLNQAIYVSATPGKWELDRSQGIVAEQIIRPTGLVDPITEVRPTKGQVDDLLGECRLRAARDERVLVTTLTKRMAEDLTEYFNEMGVAARYLHSDIDTMERMAIIQALRRKEFDVLVGINLLREGLDIPEVSLVSILDADKEGFLRSAGSLIQTFGRAARNVEGRVLMYADVVTRSMQAAMDETARRRERQTGYNEAHHIVPATIRKAVETPFDAIYAEAAEAKGRKGKGRKGAAQAAETFAPWSSDPHELAKQIQQLERDMREAAKELEFERAAELRDRIRLLREHLLGAGGAG</sequence>
<protein>
    <recommendedName>
        <fullName evidence="1">UvrABC system protein B</fullName>
        <shortName evidence="1">Protein UvrB</shortName>
    </recommendedName>
    <alternativeName>
        <fullName evidence="1">Excinuclease ABC subunit B</fullName>
    </alternativeName>
</protein>
<gene>
    <name evidence="1" type="primary">uvrB</name>
    <name type="ordered locus">DvMF_0454</name>
</gene>
<organism>
    <name type="scientific">Nitratidesulfovibrio vulgaris (strain DSM 19637 / Miyazaki F)</name>
    <name type="common">Desulfovibrio vulgaris</name>
    <dbReference type="NCBI Taxonomy" id="883"/>
    <lineage>
        <taxon>Bacteria</taxon>
        <taxon>Pseudomonadati</taxon>
        <taxon>Thermodesulfobacteriota</taxon>
        <taxon>Desulfovibrionia</taxon>
        <taxon>Desulfovibrionales</taxon>
        <taxon>Desulfovibrionaceae</taxon>
        <taxon>Nitratidesulfovibrio</taxon>
    </lineage>
</organism>
<accession>B8DJT9</accession>
<proteinExistence type="inferred from homology"/>
<reference key="1">
    <citation type="submission" date="2008-10" db="EMBL/GenBank/DDBJ databases">
        <title>Complete sequence of Desulfovibrio vulgaris str. 'Miyazaki F'.</title>
        <authorList>
            <person name="Lucas S."/>
            <person name="Copeland A."/>
            <person name="Lapidus A."/>
            <person name="Glavina del Rio T."/>
            <person name="Dalin E."/>
            <person name="Tice H."/>
            <person name="Bruce D."/>
            <person name="Goodwin L."/>
            <person name="Pitluck S."/>
            <person name="Sims D."/>
            <person name="Brettin T."/>
            <person name="Detter J.C."/>
            <person name="Han C."/>
            <person name="Larimer F."/>
            <person name="Land M."/>
            <person name="Hauser L."/>
            <person name="Kyrpides N."/>
            <person name="Mikhailova N."/>
            <person name="Hazen T.C."/>
            <person name="Richardson P."/>
        </authorList>
    </citation>
    <scope>NUCLEOTIDE SEQUENCE [LARGE SCALE GENOMIC DNA]</scope>
    <source>
        <strain>DSM 19637 / Miyazaki F</strain>
    </source>
</reference>
<comment type="function">
    <text evidence="1">The UvrABC repair system catalyzes the recognition and processing of DNA lesions. A damage recognition complex composed of 2 UvrA and 2 UvrB subunits scans DNA for abnormalities. Upon binding of the UvrA(2)B(2) complex to a putative damaged site, the DNA wraps around one UvrB monomer. DNA wrap is dependent on ATP binding by UvrB and probably causes local melting of the DNA helix, facilitating insertion of UvrB beta-hairpin between the DNA strands. Then UvrB probes one DNA strand for the presence of a lesion. If a lesion is found the UvrA subunits dissociate and the UvrB-DNA preincision complex is formed. This complex is subsequently bound by UvrC and the second UvrB is released. If no lesion is found, the DNA wraps around the other UvrB subunit that will check the other stand for damage.</text>
</comment>
<comment type="subunit">
    <text evidence="1">Forms a heterotetramer with UvrA during the search for lesions. Interacts with UvrC in an incision complex.</text>
</comment>
<comment type="subcellular location">
    <subcellularLocation>
        <location evidence="1">Cytoplasm</location>
    </subcellularLocation>
</comment>
<comment type="domain">
    <text evidence="1">The beta-hairpin motif is involved in DNA binding.</text>
</comment>
<comment type="similarity">
    <text evidence="1">Belongs to the UvrB family.</text>
</comment>